<protein>
    <recommendedName>
        <fullName>Anther-specific protein TA-29</fullName>
    </recommendedName>
</protein>
<sequence length="321" mass="33389">MVAPKWVFISFMILLSLAICSGQPVTSDAIKAKEADHDNLKAHTLSNIDAKGFGGGGGFGIGGGWAGGGGGGGDGGGSDTPNYGYNPGCSIHGCTVPGFGFLPKPVFGVPVYSPGCGYVCPADIPTGGMTESKITGISQSARLYRCKPGPNMCDSKDCNELLLHFVFPMQDKHDNKQEHLRYGGRRGIGLTVGGVGGFGIGFGAWGGGGGGGGGGSDAPGCSNDGCDPGFGCPPGCGYACPANNPSGGITEFHISGLSRFDGPYRCRPDMCESEDCNELLLHFVSPMQHKHENRHDHIVERSDEEEAHHQSKQHKDEDIIN</sequence>
<reference key="1">
    <citation type="journal article" date="1990" name="Nucleic Acids Res.">
        <title>The nucleotide sequence of an anther-specific gene.</title>
        <authorList>
            <person name="Seurinck J."/>
            <person name="Truettner J."/>
            <person name="Goldberg R.B."/>
        </authorList>
    </citation>
    <scope>NUCLEOTIDE SEQUENCE [GENOMIC DNA]</scope>
</reference>
<comment type="tissue specificity">
    <text>Anther specific (tapetal cells).</text>
</comment>
<gene>
    <name type="primary">TA-29</name>
</gene>
<organism>
    <name type="scientific">Nicotiana tabacum</name>
    <name type="common">Common tobacco</name>
    <dbReference type="NCBI Taxonomy" id="4097"/>
    <lineage>
        <taxon>Eukaryota</taxon>
        <taxon>Viridiplantae</taxon>
        <taxon>Streptophyta</taxon>
        <taxon>Embryophyta</taxon>
        <taxon>Tracheophyta</taxon>
        <taxon>Spermatophyta</taxon>
        <taxon>Magnoliopsida</taxon>
        <taxon>eudicotyledons</taxon>
        <taxon>Gunneridae</taxon>
        <taxon>Pentapetalae</taxon>
        <taxon>asterids</taxon>
        <taxon>lamiids</taxon>
        <taxon>Solanales</taxon>
        <taxon>Solanaceae</taxon>
        <taxon>Nicotianoideae</taxon>
        <taxon>Nicotianeae</taxon>
        <taxon>Nicotiana</taxon>
    </lineage>
</organism>
<dbReference type="EMBL" id="X52283">
    <property type="protein sequence ID" value="CAA36524.1"/>
    <property type="molecule type" value="Genomic_DNA"/>
</dbReference>
<dbReference type="PIR" id="S13550">
    <property type="entry name" value="S13550"/>
</dbReference>
<dbReference type="STRING" id="4097.P24804"/>
<dbReference type="PaxDb" id="4097-P24804"/>
<dbReference type="GeneID" id="107824681"/>
<dbReference type="KEGG" id="nta:107824681"/>
<dbReference type="OrthoDB" id="1296061at2759"/>
<dbReference type="Proteomes" id="UP000084051">
    <property type="component" value="Unplaced"/>
</dbReference>
<name>TA29_TOBAC</name>
<accession>P24804</accession>
<keyword id="KW-1185">Reference proteome</keyword>
<feature type="chain" id="PRO_0000072412" description="Anther-specific protein TA-29">
    <location>
        <begin position="1"/>
        <end position="321"/>
    </location>
</feature>
<feature type="region of interest" description="Disordered" evidence="1">
    <location>
        <begin position="301"/>
        <end position="321"/>
    </location>
</feature>
<proteinExistence type="evidence at transcript level"/>
<evidence type="ECO:0000256" key="1">
    <source>
        <dbReference type="SAM" id="MobiDB-lite"/>
    </source>
</evidence>